<keyword id="KW-1185">Reference proteome</keyword>
<keyword id="KW-0687">Ribonucleoprotein</keyword>
<keyword id="KW-0689">Ribosomal protein</keyword>
<keyword id="KW-0694">RNA-binding</keyword>
<keyword id="KW-0699">rRNA-binding</keyword>
<feature type="chain" id="PRO_1000165490" description="Small ribosomal subunit protein uS3">
    <location>
        <begin position="1"/>
        <end position="248"/>
    </location>
</feature>
<feature type="domain" description="KH type-2" evidence="1">
    <location>
        <begin position="38"/>
        <end position="106"/>
    </location>
</feature>
<feature type="region of interest" description="Disordered" evidence="2">
    <location>
        <begin position="214"/>
        <end position="248"/>
    </location>
</feature>
<feature type="compositionally biased region" description="Basic residues" evidence="2">
    <location>
        <begin position="231"/>
        <end position="242"/>
    </location>
</feature>
<name>RS3_CORA7</name>
<proteinExistence type="inferred from homology"/>
<protein>
    <recommendedName>
        <fullName evidence="1">Small ribosomal subunit protein uS3</fullName>
    </recommendedName>
    <alternativeName>
        <fullName evidence="3">30S ribosomal protein S3</fullName>
    </alternativeName>
</protein>
<organism>
    <name type="scientific">Corynebacterium aurimucosum (strain ATCC 700975 / DSM 44827 / CIP 107346 / CN-1)</name>
    <name type="common">Corynebacterium nigricans</name>
    <dbReference type="NCBI Taxonomy" id="548476"/>
    <lineage>
        <taxon>Bacteria</taxon>
        <taxon>Bacillati</taxon>
        <taxon>Actinomycetota</taxon>
        <taxon>Actinomycetes</taxon>
        <taxon>Mycobacteriales</taxon>
        <taxon>Corynebacteriaceae</taxon>
        <taxon>Corynebacterium</taxon>
    </lineage>
</organism>
<gene>
    <name evidence="1" type="primary">rpsC</name>
    <name type="ordered locus">cauri_0395</name>
</gene>
<comment type="function">
    <text evidence="1">Binds the lower part of the 30S subunit head. Binds mRNA in the 70S ribosome, positioning it for translation.</text>
</comment>
<comment type="subunit">
    <text evidence="1">Part of the 30S ribosomal subunit. Forms a tight complex with proteins S10 and S14.</text>
</comment>
<comment type="similarity">
    <text evidence="1">Belongs to the universal ribosomal protein uS3 family.</text>
</comment>
<dbReference type="EMBL" id="CP001601">
    <property type="protein sequence ID" value="ACP31994.1"/>
    <property type="molecule type" value="Genomic_DNA"/>
</dbReference>
<dbReference type="RefSeq" id="WP_010189644.1">
    <property type="nucleotide sequence ID" value="NZ_ACLH01000066.1"/>
</dbReference>
<dbReference type="SMR" id="C3PKQ8"/>
<dbReference type="STRING" id="548476.cauri_0395"/>
<dbReference type="GeneID" id="31923014"/>
<dbReference type="KEGG" id="car:cauri_0395"/>
<dbReference type="eggNOG" id="COG0092">
    <property type="taxonomic scope" value="Bacteria"/>
</dbReference>
<dbReference type="HOGENOM" id="CLU_058591_0_0_11"/>
<dbReference type="OrthoDB" id="9806396at2"/>
<dbReference type="Proteomes" id="UP000002077">
    <property type="component" value="Chromosome"/>
</dbReference>
<dbReference type="GO" id="GO:0022627">
    <property type="term" value="C:cytosolic small ribosomal subunit"/>
    <property type="evidence" value="ECO:0007669"/>
    <property type="project" value="TreeGrafter"/>
</dbReference>
<dbReference type="GO" id="GO:0003729">
    <property type="term" value="F:mRNA binding"/>
    <property type="evidence" value="ECO:0007669"/>
    <property type="project" value="UniProtKB-UniRule"/>
</dbReference>
<dbReference type="GO" id="GO:0019843">
    <property type="term" value="F:rRNA binding"/>
    <property type="evidence" value="ECO:0007669"/>
    <property type="project" value="UniProtKB-UniRule"/>
</dbReference>
<dbReference type="GO" id="GO:0003735">
    <property type="term" value="F:structural constituent of ribosome"/>
    <property type="evidence" value="ECO:0007669"/>
    <property type="project" value="InterPro"/>
</dbReference>
<dbReference type="GO" id="GO:0006412">
    <property type="term" value="P:translation"/>
    <property type="evidence" value="ECO:0007669"/>
    <property type="project" value="UniProtKB-UniRule"/>
</dbReference>
<dbReference type="CDD" id="cd02412">
    <property type="entry name" value="KH-II_30S_S3"/>
    <property type="match status" value="1"/>
</dbReference>
<dbReference type="FunFam" id="3.30.1140.32:FF:000002">
    <property type="entry name" value="30S ribosomal protein S3"/>
    <property type="match status" value="1"/>
</dbReference>
<dbReference type="FunFam" id="3.30.300.20:FF:000001">
    <property type="entry name" value="30S ribosomal protein S3"/>
    <property type="match status" value="1"/>
</dbReference>
<dbReference type="Gene3D" id="3.30.300.20">
    <property type="match status" value="1"/>
</dbReference>
<dbReference type="Gene3D" id="3.30.1140.32">
    <property type="entry name" value="Ribosomal protein S3, C-terminal domain"/>
    <property type="match status" value="1"/>
</dbReference>
<dbReference type="HAMAP" id="MF_01309_B">
    <property type="entry name" value="Ribosomal_uS3_B"/>
    <property type="match status" value="1"/>
</dbReference>
<dbReference type="InterPro" id="IPR004087">
    <property type="entry name" value="KH_dom"/>
</dbReference>
<dbReference type="InterPro" id="IPR015946">
    <property type="entry name" value="KH_dom-like_a/b"/>
</dbReference>
<dbReference type="InterPro" id="IPR004044">
    <property type="entry name" value="KH_dom_type_2"/>
</dbReference>
<dbReference type="InterPro" id="IPR009019">
    <property type="entry name" value="KH_sf_prok-type"/>
</dbReference>
<dbReference type="InterPro" id="IPR036419">
    <property type="entry name" value="Ribosomal_S3_C_sf"/>
</dbReference>
<dbReference type="InterPro" id="IPR005704">
    <property type="entry name" value="Ribosomal_uS3_bac-typ"/>
</dbReference>
<dbReference type="InterPro" id="IPR001351">
    <property type="entry name" value="Ribosomal_uS3_C"/>
</dbReference>
<dbReference type="InterPro" id="IPR018280">
    <property type="entry name" value="Ribosomal_uS3_CS"/>
</dbReference>
<dbReference type="NCBIfam" id="TIGR01009">
    <property type="entry name" value="rpsC_bact"/>
    <property type="match status" value="1"/>
</dbReference>
<dbReference type="PANTHER" id="PTHR11760">
    <property type="entry name" value="30S/40S RIBOSOMAL PROTEIN S3"/>
    <property type="match status" value="1"/>
</dbReference>
<dbReference type="PANTHER" id="PTHR11760:SF19">
    <property type="entry name" value="SMALL RIBOSOMAL SUBUNIT PROTEIN US3C"/>
    <property type="match status" value="1"/>
</dbReference>
<dbReference type="Pfam" id="PF07650">
    <property type="entry name" value="KH_2"/>
    <property type="match status" value="1"/>
</dbReference>
<dbReference type="Pfam" id="PF00189">
    <property type="entry name" value="Ribosomal_S3_C"/>
    <property type="match status" value="1"/>
</dbReference>
<dbReference type="SMART" id="SM00322">
    <property type="entry name" value="KH"/>
    <property type="match status" value="1"/>
</dbReference>
<dbReference type="SUPFAM" id="SSF54814">
    <property type="entry name" value="Prokaryotic type KH domain (KH-domain type II)"/>
    <property type="match status" value="1"/>
</dbReference>
<dbReference type="SUPFAM" id="SSF54821">
    <property type="entry name" value="Ribosomal protein S3 C-terminal domain"/>
    <property type="match status" value="1"/>
</dbReference>
<dbReference type="PROSITE" id="PS50823">
    <property type="entry name" value="KH_TYPE_2"/>
    <property type="match status" value="1"/>
</dbReference>
<dbReference type="PROSITE" id="PS00548">
    <property type="entry name" value="RIBOSOMAL_S3"/>
    <property type="match status" value="1"/>
</dbReference>
<accession>C3PKQ8</accession>
<reference key="1">
    <citation type="journal article" date="2010" name="BMC Genomics">
        <title>Complete genome sequence and lifestyle of black-pigmented Corynebacterium aurimucosum ATCC 700975 (formerly C. nigricans CN-1) isolated from a vaginal swab of a woman with spontaneous abortion.</title>
        <authorList>
            <person name="Trost E."/>
            <person name="Gotker S."/>
            <person name="Schneider J."/>
            <person name="Schneiker-Bekel S."/>
            <person name="Szczepanowski R."/>
            <person name="Tilker A."/>
            <person name="Viehoever P."/>
            <person name="Arnold W."/>
            <person name="Bekel T."/>
            <person name="Blom J."/>
            <person name="Gartemann K.H."/>
            <person name="Linke B."/>
            <person name="Goesmann A."/>
            <person name="Puhler A."/>
            <person name="Shukla S.K."/>
            <person name="Tauch A."/>
        </authorList>
    </citation>
    <scope>NUCLEOTIDE SEQUENCE [LARGE SCALE GENOMIC DNA]</scope>
    <source>
        <strain>ATCC 700975 / DSM 44827 / CIP 107346 / CN-1</strain>
    </source>
</reference>
<evidence type="ECO:0000255" key="1">
    <source>
        <dbReference type="HAMAP-Rule" id="MF_01309"/>
    </source>
</evidence>
<evidence type="ECO:0000256" key="2">
    <source>
        <dbReference type="SAM" id="MobiDB-lite"/>
    </source>
</evidence>
<evidence type="ECO:0000305" key="3"/>
<sequence length="248" mass="27970">MGQKIHPHGLRLGITSDWKTHWYADKDYANYVAEDIKIREYLEKGLDRAGIADVVIERTRDRVRVDIHTARPGIVIGRRGAEADRIRRELEKLTGKMVALNILEVKQVDANATLVAQSVAEQLVNRVAFRRAMRKAIQSAMRQPQVKGIKILLSGRLGGAEMSRTERYHEGRVPLHTLRAEIDYGTAEAHTTFGRIGIKVWIYKGDVVGGVRESELNAPAQGRGRGDRNGRPRRGGQRRQRAQQKQEG</sequence>